<dbReference type="EC" id="2.7.7.87" evidence="1"/>
<dbReference type="EMBL" id="CP001048">
    <property type="protein sequence ID" value="ACC90802.1"/>
    <property type="molecule type" value="Genomic_DNA"/>
</dbReference>
<dbReference type="RefSeq" id="WP_002209025.1">
    <property type="nucleotide sequence ID" value="NZ_CP009780.1"/>
</dbReference>
<dbReference type="SMR" id="B2K500"/>
<dbReference type="GeneID" id="57974358"/>
<dbReference type="KEGG" id="ypb:YPTS_3853"/>
<dbReference type="PATRIC" id="fig|502801.10.peg.3318"/>
<dbReference type="GO" id="GO:0005737">
    <property type="term" value="C:cytoplasm"/>
    <property type="evidence" value="ECO:0007669"/>
    <property type="project" value="UniProtKB-SubCell"/>
</dbReference>
<dbReference type="GO" id="GO:0005524">
    <property type="term" value="F:ATP binding"/>
    <property type="evidence" value="ECO:0007669"/>
    <property type="project" value="UniProtKB-UniRule"/>
</dbReference>
<dbReference type="GO" id="GO:0003725">
    <property type="term" value="F:double-stranded RNA binding"/>
    <property type="evidence" value="ECO:0007669"/>
    <property type="project" value="InterPro"/>
</dbReference>
<dbReference type="GO" id="GO:0061710">
    <property type="term" value="F:L-threonylcarbamoyladenylate synthase"/>
    <property type="evidence" value="ECO:0007669"/>
    <property type="project" value="UniProtKB-EC"/>
</dbReference>
<dbReference type="GO" id="GO:0000049">
    <property type="term" value="F:tRNA binding"/>
    <property type="evidence" value="ECO:0007669"/>
    <property type="project" value="TreeGrafter"/>
</dbReference>
<dbReference type="GO" id="GO:0006450">
    <property type="term" value="P:regulation of translational fidelity"/>
    <property type="evidence" value="ECO:0007669"/>
    <property type="project" value="TreeGrafter"/>
</dbReference>
<dbReference type="GO" id="GO:0002949">
    <property type="term" value="P:tRNA threonylcarbamoyladenosine modification"/>
    <property type="evidence" value="ECO:0007669"/>
    <property type="project" value="UniProtKB-UniRule"/>
</dbReference>
<dbReference type="FunFam" id="3.90.870.10:FF:000004">
    <property type="entry name" value="Threonylcarbamoyl-AMP synthase"/>
    <property type="match status" value="1"/>
</dbReference>
<dbReference type="Gene3D" id="3.90.870.10">
    <property type="entry name" value="DHBP synthase"/>
    <property type="match status" value="1"/>
</dbReference>
<dbReference type="HAMAP" id="MF_01852">
    <property type="entry name" value="TsaC"/>
    <property type="match status" value="1"/>
</dbReference>
<dbReference type="InterPro" id="IPR017945">
    <property type="entry name" value="DHBP_synth_RibB-like_a/b_dom"/>
</dbReference>
<dbReference type="InterPro" id="IPR006070">
    <property type="entry name" value="Sua5-like_dom"/>
</dbReference>
<dbReference type="InterPro" id="IPR023535">
    <property type="entry name" value="TC-AMP_synthase"/>
</dbReference>
<dbReference type="InterPro" id="IPR050156">
    <property type="entry name" value="TC-AMP_synthase_SUA5"/>
</dbReference>
<dbReference type="NCBIfam" id="NF007919">
    <property type="entry name" value="PRK10634.1"/>
    <property type="match status" value="1"/>
</dbReference>
<dbReference type="PANTHER" id="PTHR17490">
    <property type="entry name" value="SUA5"/>
    <property type="match status" value="1"/>
</dbReference>
<dbReference type="PANTHER" id="PTHR17490:SF18">
    <property type="entry name" value="THREONYLCARBAMOYL-AMP SYNTHASE"/>
    <property type="match status" value="1"/>
</dbReference>
<dbReference type="Pfam" id="PF01300">
    <property type="entry name" value="Sua5_yciO_yrdC"/>
    <property type="match status" value="1"/>
</dbReference>
<dbReference type="SUPFAM" id="SSF55821">
    <property type="entry name" value="YrdC/RibB"/>
    <property type="match status" value="1"/>
</dbReference>
<dbReference type="PROSITE" id="PS51163">
    <property type="entry name" value="YRDC"/>
    <property type="match status" value="1"/>
</dbReference>
<protein>
    <recommendedName>
        <fullName evidence="1">Threonylcarbamoyl-AMP synthase</fullName>
        <shortName evidence="1">TC-AMP synthase</shortName>
        <ecNumber evidence="1">2.7.7.87</ecNumber>
    </recommendedName>
    <alternativeName>
        <fullName evidence="1">L-threonylcarbamoyladenylate synthase</fullName>
    </alternativeName>
    <alternativeName>
        <fullName evidence="1">t(6)A37 threonylcarbamoyladenosine biosynthesis protein TsaC</fullName>
    </alternativeName>
    <alternativeName>
        <fullName evidence="1">tRNA threonylcarbamoyladenosine biosynthesis protein TsaC</fullName>
    </alternativeName>
</protein>
<accession>B2K500</accession>
<feature type="chain" id="PRO_0000353028" description="Threonylcarbamoyl-AMP synthase">
    <location>
        <begin position="1"/>
        <end position="190"/>
    </location>
</feature>
<feature type="domain" description="YrdC-like" evidence="1">
    <location>
        <begin position="7"/>
        <end position="190"/>
    </location>
</feature>
<proteinExistence type="inferred from homology"/>
<comment type="function">
    <text evidence="1">Required for the formation of a threonylcarbamoyl group on adenosine at position 37 (t(6)A37) in tRNAs that read codons beginning with adenine. Catalyzes the conversion of L-threonine, HCO(3)(-)/CO(2) and ATP to give threonylcarbamoyl-AMP (TC-AMP) as the acyladenylate intermediate, with the release of diphosphate.</text>
</comment>
<comment type="catalytic activity">
    <reaction evidence="1">
        <text>L-threonine + hydrogencarbonate + ATP = L-threonylcarbamoyladenylate + diphosphate + H2O</text>
        <dbReference type="Rhea" id="RHEA:36407"/>
        <dbReference type="ChEBI" id="CHEBI:15377"/>
        <dbReference type="ChEBI" id="CHEBI:17544"/>
        <dbReference type="ChEBI" id="CHEBI:30616"/>
        <dbReference type="ChEBI" id="CHEBI:33019"/>
        <dbReference type="ChEBI" id="CHEBI:57926"/>
        <dbReference type="ChEBI" id="CHEBI:73682"/>
        <dbReference type="EC" id="2.7.7.87"/>
    </reaction>
</comment>
<comment type="subcellular location">
    <subcellularLocation>
        <location evidence="1">Cytoplasm</location>
    </subcellularLocation>
</comment>
<comment type="similarity">
    <text evidence="1">Belongs to the SUA5 family. TsaC subfamily.</text>
</comment>
<sequence>MNQQENNFVLADIVRALRQEEVIAYPTEAVFGLGCDPDSEKAVNTLLALKQRPWQKGLILVAANYAQLEPYINDSMLNEIQRETLFSTWPGPITWVIPARVETPQWLTGCFDSLAVRVSNHPLVQQLCAEYGKPLVSTSANLSGHEPCRTEEEVRIQFGPSLPVLSGHVGGRLNPSEIRDALTGKRFRQG</sequence>
<name>TSAC_YERPB</name>
<organism>
    <name type="scientific">Yersinia pseudotuberculosis serotype IB (strain PB1/+)</name>
    <dbReference type="NCBI Taxonomy" id="502801"/>
    <lineage>
        <taxon>Bacteria</taxon>
        <taxon>Pseudomonadati</taxon>
        <taxon>Pseudomonadota</taxon>
        <taxon>Gammaproteobacteria</taxon>
        <taxon>Enterobacterales</taxon>
        <taxon>Yersiniaceae</taxon>
        <taxon>Yersinia</taxon>
    </lineage>
</organism>
<evidence type="ECO:0000255" key="1">
    <source>
        <dbReference type="HAMAP-Rule" id="MF_01852"/>
    </source>
</evidence>
<gene>
    <name evidence="1" type="primary">tsaC</name>
    <name type="synonym">rimN</name>
    <name type="ordered locus">YPTS_3853</name>
</gene>
<keyword id="KW-0067">ATP-binding</keyword>
<keyword id="KW-0963">Cytoplasm</keyword>
<keyword id="KW-0547">Nucleotide-binding</keyword>
<keyword id="KW-0548">Nucleotidyltransferase</keyword>
<keyword id="KW-0808">Transferase</keyword>
<keyword id="KW-0819">tRNA processing</keyword>
<reference key="1">
    <citation type="submission" date="2008-04" db="EMBL/GenBank/DDBJ databases">
        <title>Complete sequence of Yersinia pseudotuberculosis PB1/+.</title>
        <authorList>
            <person name="Copeland A."/>
            <person name="Lucas S."/>
            <person name="Lapidus A."/>
            <person name="Glavina del Rio T."/>
            <person name="Dalin E."/>
            <person name="Tice H."/>
            <person name="Bruce D."/>
            <person name="Goodwin L."/>
            <person name="Pitluck S."/>
            <person name="Munk A.C."/>
            <person name="Brettin T."/>
            <person name="Detter J.C."/>
            <person name="Han C."/>
            <person name="Tapia R."/>
            <person name="Schmutz J."/>
            <person name="Larimer F."/>
            <person name="Land M."/>
            <person name="Hauser L."/>
            <person name="Challacombe J.F."/>
            <person name="Green L."/>
            <person name="Lindler L.E."/>
            <person name="Nikolich M.P."/>
            <person name="Richardson P."/>
        </authorList>
    </citation>
    <scope>NUCLEOTIDE SEQUENCE [LARGE SCALE GENOMIC DNA]</scope>
    <source>
        <strain>PB1/+</strain>
    </source>
</reference>